<keyword id="KW-0472">Membrane</keyword>
<keyword id="KW-0602">Photosynthesis</keyword>
<keyword id="KW-0604">Photosystem II</keyword>
<keyword id="KW-1185">Reference proteome</keyword>
<keyword id="KW-0793">Thylakoid</keyword>
<keyword id="KW-0812">Transmembrane</keyword>
<keyword id="KW-1133">Transmembrane helix</keyword>
<evidence type="ECO:0000255" key="1">
    <source>
        <dbReference type="HAMAP-Rule" id="MF_01386"/>
    </source>
</evidence>
<comment type="function">
    <text evidence="1">Involved in the binding and/or turnover of quinones at the Q(B) site of photosystem II (PSII). PSII is a light-driven water plastoquinone oxidoreductase, using light energy to abstract electrons from H(2)O, generating a proton gradient subsequently used for ATP formation.</text>
</comment>
<comment type="subunit">
    <text evidence="1">PSII is composed of 1 copy each of membrane proteins PsbA, PsbB, PsbC, PsbD, PsbE, PsbF, PsbH, PsbI, PsbJ, PsbK, PsbL, PsbM, PsbT, PsbX, PsbY, PsbZ, Psb30/Ycf12, peripheral proteins PsbO, CyanoQ (PsbQ), PsbU, PsbV and a large number of cofactors. It forms dimeric complexes.</text>
</comment>
<comment type="subcellular location">
    <subcellularLocation>
        <location evidence="1">Cellular thylakoid membrane</location>
        <topology evidence="1">Single-pass membrane protein</topology>
    </subcellularLocation>
</comment>
<comment type="similarity">
    <text evidence="1">Belongs to the PsbX family. Type 1 subfamily.</text>
</comment>
<organism>
    <name type="scientific">Gloeothece citriformis (strain PCC 7424)</name>
    <name type="common">Cyanothece sp. (strain PCC 7424)</name>
    <dbReference type="NCBI Taxonomy" id="65393"/>
    <lineage>
        <taxon>Bacteria</taxon>
        <taxon>Bacillati</taxon>
        <taxon>Cyanobacteriota</taxon>
        <taxon>Cyanophyceae</taxon>
        <taxon>Oscillatoriophycideae</taxon>
        <taxon>Chroococcales</taxon>
        <taxon>Aphanothecaceae</taxon>
        <taxon>Gloeothece</taxon>
        <taxon>Gloeothece citriformis</taxon>
    </lineage>
</organism>
<dbReference type="EMBL" id="CP001291">
    <property type="protein sequence ID" value="ACK72387.1"/>
    <property type="molecule type" value="Genomic_DNA"/>
</dbReference>
<dbReference type="RefSeq" id="WP_015955972.1">
    <property type="nucleotide sequence ID" value="NC_011729.1"/>
</dbReference>
<dbReference type="SMR" id="B7KL15"/>
<dbReference type="STRING" id="65393.PCC7424_4013"/>
<dbReference type="KEGG" id="cyc:PCC7424_4013"/>
<dbReference type="eggNOG" id="ENOG5033AJK">
    <property type="taxonomic scope" value="Bacteria"/>
</dbReference>
<dbReference type="HOGENOM" id="CLU_212837_1_0_3"/>
<dbReference type="OrthoDB" id="541645at2"/>
<dbReference type="Proteomes" id="UP000002384">
    <property type="component" value="Chromosome"/>
</dbReference>
<dbReference type="GO" id="GO:0009523">
    <property type="term" value="C:photosystem II"/>
    <property type="evidence" value="ECO:0007669"/>
    <property type="project" value="UniProtKB-KW"/>
</dbReference>
<dbReference type="GO" id="GO:0031676">
    <property type="term" value="C:plasma membrane-derived thylakoid membrane"/>
    <property type="evidence" value="ECO:0007669"/>
    <property type="project" value="UniProtKB-SubCell"/>
</dbReference>
<dbReference type="GO" id="GO:0015979">
    <property type="term" value="P:photosynthesis"/>
    <property type="evidence" value="ECO:0007669"/>
    <property type="project" value="UniProtKB-UniRule"/>
</dbReference>
<dbReference type="Gene3D" id="1.20.5.510">
    <property type="entry name" value="Single helix bin"/>
    <property type="match status" value="1"/>
</dbReference>
<dbReference type="HAMAP" id="MF_01386">
    <property type="entry name" value="PSII_PsbX_1"/>
    <property type="match status" value="1"/>
</dbReference>
<dbReference type="InterPro" id="IPR009518">
    <property type="entry name" value="PSII_PsbX"/>
</dbReference>
<dbReference type="InterPro" id="IPR023431">
    <property type="entry name" value="PSII_PsbX_type_1_subfam"/>
</dbReference>
<dbReference type="Pfam" id="PF06596">
    <property type="entry name" value="PsbX"/>
    <property type="match status" value="1"/>
</dbReference>
<name>PSBX_GLOC7</name>
<feature type="chain" id="PRO_1000145153" description="Photosystem II reaction center protein X">
    <location>
        <begin position="1"/>
        <end position="40"/>
    </location>
</feature>
<feature type="transmembrane region" description="Helical" evidence="1">
    <location>
        <begin position="12"/>
        <end position="32"/>
    </location>
</feature>
<accession>B7KL15</accession>
<sequence>MTPSLANFLWSLVWGAVIVVIPATVALIFISVNDQIKRSQ</sequence>
<protein>
    <recommendedName>
        <fullName evidence="1">Photosystem II reaction center protein X</fullName>
    </recommendedName>
</protein>
<gene>
    <name evidence="1" type="primary">psbX</name>
    <name type="ordered locus">PCC7424_4013</name>
</gene>
<proteinExistence type="inferred from homology"/>
<reference key="1">
    <citation type="journal article" date="2011" name="MBio">
        <title>Novel metabolic attributes of the genus Cyanothece, comprising a group of unicellular nitrogen-fixing Cyanobacteria.</title>
        <authorList>
            <person name="Bandyopadhyay A."/>
            <person name="Elvitigala T."/>
            <person name="Welsh E."/>
            <person name="Stockel J."/>
            <person name="Liberton M."/>
            <person name="Min H."/>
            <person name="Sherman L.A."/>
            <person name="Pakrasi H.B."/>
        </authorList>
    </citation>
    <scope>NUCLEOTIDE SEQUENCE [LARGE SCALE GENOMIC DNA]</scope>
    <source>
        <strain>PCC 7424</strain>
    </source>
</reference>